<reference key="1">
    <citation type="journal article" date="2006" name="Planta">
        <title>Color genes in the orchid Oncidium Gower Ramsey: identification, expression, and potential genetic instability in an interspecific cross.</title>
        <authorList>
            <person name="Hieber A.D."/>
            <person name="Mudalige-Jayawickrama R.G."/>
            <person name="Kuehnle A.R."/>
        </authorList>
    </citation>
    <scope>NUCLEOTIDE SEQUENCE [MRNA]</scope>
    <scope>TISSUE SPECIFICITY</scope>
</reference>
<reference key="2">
    <citation type="journal article" date="2010" name="Planta">
        <title>Differential expression of carotenoid-related genes determines diversified carotenoid coloration in floral tissues of Oncidium cultivars.</title>
        <authorList>
            <person name="Chiou C.Y."/>
            <person name="Pan H.A."/>
            <person name="Chuang Y.N."/>
            <person name="Yeh K.W."/>
        </authorList>
    </citation>
    <scope>NUCLEOTIDE SEQUENCE [MRNA]</scope>
    <scope>DEVELOPMENTAL STAGE</scope>
    <scope>TISSUE SPECIFICITY</scope>
</reference>
<feature type="transit peptide" description="Chloroplast" evidence="2">
    <location>
        <begin position="1"/>
        <end status="unknown"/>
    </location>
</feature>
<feature type="chain" id="PRO_0000426707" description="Phytoene synthase, chloroplastic">
    <location>
        <begin status="unknown"/>
        <end position="412"/>
    </location>
</feature>
<proteinExistence type="evidence at transcript level"/>
<organism>
    <name type="scientific">Oncidium hybrid cultivar</name>
    <name type="common">Orchid</name>
    <dbReference type="NCBI Taxonomy" id="141207"/>
    <lineage>
        <taxon>Eukaryota</taxon>
        <taxon>Viridiplantae</taxon>
        <taxon>Streptophyta</taxon>
        <taxon>Embryophyta</taxon>
        <taxon>Tracheophyta</taxon>
        <taxon>Spermatophyta</taxon>
        <taxon>Magnoliopsida</taxon>
        <taxon>Liliopsida</taxon>
        <taxon>Asparagales</taxon>
        <taxon>Orchidaceae</taxon>
        <taxon>Epidendroideae</taxon>
        <taxon>Cymbidieae</taxon>
        <taxon>Oncidiinae</taxon>
        <taxon>Oncidium</taxon>
    </lineage>
</organism>
<keyword id="KW-0125">Carotenoid biosynthesis</keyword>
<keyword id="KW-0150">Chloroplast</keyword>
<keyword id="KW-0414">Isoprene biosynthesis</keyword>
<keyword id="KW-0934">Plastid</keyword>
<keyword id="KW-0808">Transferase</keyword>
<keyword id="KW-0809">Transit peptide</keyword>
<name>PSY_ONCHC</name>
<comment type="function">
    <text evidence="1">Catalyzes the reaction from prephytoene diphosphate to phytoene.</text>
</comment>
<comment type="catalytic activity">
    <reaction>
        <text>2 (2E,6E,10E)-geranylgeranyl diphosphate = 15-cis-phytoene + 2 diphosphate</text>
        <dbReference type="Rhea" id="RHEA:34475"/>
        <dbReference type="ChEBI" id="CHEBI:27787"/>
        <dbReference type="ChEBI" id="CHEBI:33019"/>
        <dbReference type="ChEBI" id="CHEBI:58756"/>
        <dbReference type="EC" id="2.5.1.32"/>
    </reaction>
</comment>
<comment type="pathway">
    <text>Carotenoid biosynthesis; phytoene biosynthesis; all-trans-phytoene from geranylgeranyl diphosphate: step 1/1.</text>
</comment>
<comment type="subunit">
    <text evidence="1">Monomer.</text>
</comment>
<comment type="subcellular location">
    <subcellularLocation>
        <location evidence="5">Plastid</location>
        <location evidence="5">Chloroplast</location>
    </subcellularLocation>
</comment>
<comment type="tissue specificity">
    <text evidence="3 4">Expressed in roots, leaves, flower buds, sepals, petals, lips and lip crests.</text>
</comment>
<comment type="developmental stage">
    <text evidence="4">Expressed during floral development.</text>
</comment>
<comment type="similarity">
    <text evidence="5">Belongs to the phytoene/squalene synthase family.</text>
</comment>
<protein>
    <recommendedName>
        <fullName>Phytoene synthase, chloroplastic</fullName>
        <shortName>OgPSY</shortName>
        <ecNumber>2.5.1.32</ecNumber>
    </recommendedName>
</protein>
<dbReference type="EC" id="2.5.1.32"/>
<dbReference type="EMBL" id="AY973631">
    <property type="protein sequence ID" value="AAX84686.1"/>
    <property type="molecule type" value="mRNA"/>
</dbReference>
<dbReference type="EMBL" id="FJ859988">
    <property type="protein sequence ID" value="ACP27623.1"/>
    <property type="molecule type" value="mRNA"/>
</dbReference>
<dbReference type="SMR" id="Q52QW5"/>
<dbReference type="UniPathway" id="UPA00799">
    <property type="reaction ID" value="UER00773"/>
</dbReference>
<dbReference type="GO" id="GO:0010287">
    <property type="term" value="C:plastoglobule"/>
    <property type="evidence" value="ECO:0007669"/>
    <property type="project" value="UniProtKB-ARBA"/>
</dbReference>
<dbReference type="GO" id="GO:0046905">
    <property type="term" value="F:15-cis-phytoene synthase activity"/>
    <property type="evidence" value="ECO:0007669"/>
    <property type="project" value="UniProtKB-ARBA"/>
</dbReference>
<dbReference type="GO" id="GO:0004311">
    <property type="term" value="F:geranylgeranyl diphosphate synthase activity"/>
    <property type="evidence" value="ECO:0007669"/>
    <property type="project" value="InterPro"/>
</dbReference>
<dbReference type="GO" id="GO:0051996">
    <property type="term" value="F:squalene synthase [NAD(P)H] activity"/>
    <property type="evidence" value="ECO:0007669"/>
    <property type="project" value="InterPro"/>
</dbReference>
<dbReference type="GO" id="GO:0016117">
    <property type="term" value="P:carotenoid biosynthetic process"/>
    <property type="evidence" value="ECO:0007669"/>
    <property type="project" value="UniProtKB-KW"/>
</dbReference>
<dbReference type="CDD" id="cd00683">
    <property type="entry name" value="Trans_IPPS_HH"/>
    <property type="match status" value="1"/>
</dbReference>
<dbReference type="FunFam" id="1.10.600.10:FF:000004">
    <property type="entry name" value="Phytoene synthase chloroplastic"/>
    <property type="match status" value="1"/>
</dbReference>
<dbReference type="Gene3D" id="1.10.600.10">
    <property type="entry name" value="Farnesyl Diphosphate Synthase"/>
    <property type="match status" value="1"/>
</dbReference>
<dbReference type="InterPro" id="IPR008949">
    <property type="entry name" value="Isoprenoid_synthase_dom_sf"/>
</dbReference>
<dbReference type="InterPro" id="IPR002060">
    <property type="entry name" value="Squ/phyt_synthse"/>
</dbReference>
<dbReference type="InterPro" id="IPR019845">
    <property type="entry name" value="Squalene/phytoene_synthase_CS"/>
</dbReference>
<dbReference type="InterPro" id="IPR044843">
    <property type="entry name" value="Trans_IPPS_bact-type"/>
</dbReference>
<dbReference type="InterPro" id="IPR033904">
    <property type="entry name" value="Trans_IPPS_HH"/>
</dbReference>
<dbReference type="PANTHER" id="PTHR31480">
    <property type="entry name" value="BIFUNCTIONAL LYCOPENE CYCLASE/PHYTOENE SYNTHASE"/>
    <property type="match status" value="1"/>
</dbReference>
<dbReference type="Pfam" id="PF00494">
    <property type="entry name" value="SQS_PSY"/>
    <property type="match status" value="1"/>
</dbReference>
<dbReference type="SFLD" id="SFLDS00005">
    <property type="entry name" value="Isoprenoid_Synthase_Type_I"/>
    <property type="match status" value="1"/>
</dbReference>
<dbReference type="SFLD" id="SFLDG01212">
    <property type="entry name" value="Phytoene_synthase_like"/>
    <property type="match status" value="1"/>
</dbReference>
<dbReference type="SUPFAM" id="SSF48576">
    <property type="entry name" value="Terpenoid synthases"/>
    <property type="match status" value="1"/>
</dbReference>
<dbReference type="PROSITE" id="PS01044">
    <property type="entry name" value="SQUALEN_PHYTOEN_SYN_1"/>
    <property type="match status" value="1"/>
</dbReference>
<dbReference type="PROSITE" id="PS01045">
    <property type="entry name" value="SQUALEN_PHYTOEN_SYN_2"/>
    <property type="match status" value="1"/>
</dbReference>
<gene>
    <name type="primary">PSY</name>
</gene>
<evidence type="ECO:0000250" key="1"/>
<evidence type="ECO:0000255" key="2"/>
<evidence type="ECO:0000269" key="3">
    <source>
    </source>
</evidence>
<evidence type="ECO:0000269" key="4">
    <source>
    </source>
</evidence>
<evidence type="ECO:0000305" key="5"/>
<accession>Q52QW5</accession>
<sequence length="412" mass="47257">MAASQLCFVGFLEGIRGGDRLWNAKNDCRFSQRKKMRWSFYCLFTNFNYACVSQEPEKDLKFPIYSSLVVNPVGEVAISSEQKVYDVVLKQAALVEQQLRNRTVLEEKTGTTFLLNEAYDRCGQICEEYAKTFYLGTLLMTPERRRAIWAIYVWCRRTDELVDGPNASHITPSALDRWEARLEDLFAGRPYDMLDASLSDTVVNFPVDIQPFKDMIEGMRMDLKKSRYKNFDELYLYCYYVAGTVGLMSVPVMGIDPESDATTESVYNAALSLGIANQLTNILRDVGEDTRRGRVYLPQDELAEAGLSDEDIFNGKVTDRWRNFMKNQIKRARTFFQEAEKGIAELNQASRWPVLASLLLYRQILDEIEANDYNNFTKRAYVSKAKKLMAVPVAYGRSLIRPSMKKPSLVKP</sequence>